<proteinExistence type="inferred from homology"/>
<name>SYL_MAGMM</name>
<organism>
    <name type="scientific">Magnetococcus marinus (strain ATCC BAA-1437 / JCM 17883 / MC-1)</name>
    <dbReference type="NCBI Taxonomy" id="156889"/>
    <lineage>
        <taxon>Bacteria</taxon>
        <taxon>Pseudomonadati</taxon>
        <taxon>Pseudomonadota</taxon>
        <taxon>Alphaproteobacteria</taxon>
        <taxon>Magnetococcales</taxon>
        <taxon>Magnetococcaceae</taxon>
        <taxon>Magnetococcus</taxon>
    </lineage>
</organism>
<sequence>MDQKYNPQAIESKWQKIWHQQKTFATPENLGDKETFYLLVMFPYPSGRIHMGHVRNYAIGDVIARYQRMQGKAVLHPMGWDAFGMPAENAAAQRKVHPRDWTYENIATMREELKSMGLSYDWDREFATCDEDYAHAEQVLFLRLYEKGLVYRKHAFVNWDPVDHTVLANEQVIDGCGWRSGAPVEQRELNQWFFRITHYADELLDNLQHMDGWPETVRTMQTNWIGKSHGVEFAFALEGYPGTLPVYTTRPDTLMGVTFCSVAAEHPIAAAVAENNPAAAAFIKTCQGVGTSEEALEKLEKKGFDTGIKAIHPITGESLPVYIANFVLMSYGTGAVMAVPAHDQRDFEFAKKHGIEIKVVIQPEGQTLHAEQLSEAYTGPGRLVNSGLFTGMDNEQAKQRVAEYFEAQGIGKGTINYRLRDWGISRQRYWGNPIPMVHCAACGVVPVPVAQLPIQLPNEVDFSEPGNPLERHPSWKTCDCPQCGQPARRETDTMDTFMESSWYFLRYCSPHMGGVPLDKAAVDRWMPVNQYVGGIEHAVLHLLYARFFHKALRDIGEVSCDEPFARLLTQGMVRKDTHRCAQHGWRYPKEVQERDGALYCIECGGAVTVGRNEKMSKSKHNVVDPNDLIAGYGADTARLFMLFAAPADRDLEWNDSGVDGAWRFLGRVWRLVLAAIERCGERQACTTTPADEQLKAFRSQLHNTIVKVTEDLNRQSFNTAIAAVMEMSNGAIATFKGEDRLTGEASALLWETAQVTVKLLHPYAPHMTEELWQRMGEQSLLSDTPWPLADAAALVKERVLIVIQVNGKLRSKLEVPVDMAQEAIEKLALADEHVKVQTEGKTIRKVVVVPGRLVNIVAN</sequence>
<accession>A0L4R4</accession>
<protein>
    <recommendedName>
        <fullName evidence="1">Leucine--tRNA ligase</fullName>
        <ecNumber evidence="1">6.1.1.4</ecNumber>
    </recommendedName>
    <alternativeName>
        <fullName evidence="1">Leucyl-tRNA synthetase</fullName>
        <shortName evidence="1">LeuRS</shortName>
    </alternativeName>
</protein>
<reference key="1">
    <citation type="journal article" date="2009" name="Appl. Environ. Microbiol.">
        <title>Complete genome sequence of the chemolithoautotrophic marine magnetotactic coccus strain MC-1.</title>
        <authorList>
            <person name="Schubbe S."/>
            <person name="Williams T.J."/>
            <person name="Xie G."/>
            <person name="Kiss H.E."/>
            <person name="Brettin T.S."/>
            <person name="Martinez D."/>
            <person name="Ross C.A."/>
            <person name="Schuler D."/>
            <person name="Cox B.L."/>
            <person name="Nealson K.H."/>
            <person name="Bazylinski D.A."/>
        </authorList>
    </citation>
    <scope>NUCLEOTIDE SEQUENCE [LARGE SCALE GENOMIC DNA]</scope>
    <source>
        <strain>ATCC BAA-1437 / JCM 17883 / MC-1</strain>
    </source>
</reference>
<feature type="chain" id="PRO_1000071112" description="Leucine--tRNA ligase">
    <location>
        <begin position="1"/>
        <end position="859"/>
    </location>
</feature>
<feature type="short sequence motif" description="'HIGH' region">
    <location>
        <begin position="43"/>
        <end position="53"/>
    </location>
</feature>
<feature type="short sequence motif" description="'KMSKS' region">
    <location>
        <begin position="614"/>
        <end position="618"/>
    </location>
</feature>
<feature type="binding site" evidence="1">
    <location>
        <position position="617"/>
    </location>
    <ligand>
        <name>ATP</name>
        <dbReference type="ChEBI" id="CHEBI:30616"/>
    </ligand>
</feature>
<keyword id="KW-0030">Aminoacyl-tRNA synthetase</keyword>
<keyword id="KW-0067">ATP-binding</keyword>
<keyword id="KW-0963">Cytoplasm</keyword>
<keyword id="KW-0436">Ligase</keyword>
<keyword id="KW-0547">Nucleotide-binding</keyword>
<keyword id="KW-0648">Protein biosynthesis</keyword>
<keyword id="KW-1185">Reference proteome</keyword>
<evidence type="ECO:0000255" key="1">
    <source>
        <dbReference type="HAMAP-Rule" id="MF_00049"/>
    </source>
</evidence>
<comment type="catalytic activity">
    <reaction evidence="1">
        <text>tRNA(Leu) + L-leucine + ATP = L-leucyl-tRNA(Leu) + AMP + diphosphate</text>
        <dbReference type="Rhea" id="RHEA:11688"/>
        <dbReference type="Rhea" id="RHEA-COMP:9613"/>
        <dbReference type="Rhea" id="RHEA-COMP:9622"/>
        <dbReference type="ChEBI" id="CHEBI:30616"/>
        <dbReference type="ChEBI" id="CHEBI:33019"/>
        <dbReference type="ChEBI" id="CHEBI:57427"/>
        <dbReference type="ChEBI" id="CHEBI:78442"/>
        <dbReference type="ChEBI" id="CHEBI:78494"/>
        <dbReference type="ChEBI" id="CHEBI:456215"/>
        <dbReference type="EC" id="6.1.1.4"/>
    </reaction>
</comment>
<comment type="subcellular location">
    <subcellularLocation>
        <location evidence="1">Cytoplasm</location>
    </subcellularLocation>
</comment>
<comment type="similarity">
    <text evidence="1">Belongs to the class-I aminoacyl-tRNA synthetase family.</text>
</comment>
<dbReference type="EC" id="6.1.1.4" evidence="1"/>
<dbReference type="EMBL" id="CP000471">
    <property type="protein sequence ID" value="ABK42957.1"/>
    <property type="molecule type" value="Genomic_DNA"/>
</dbReference>
<dbReference type="RefSeq" id="WP_011712127.1">
    <property type="nucleotide sequence ID" value="NC_008576.1"/>
</dbReference>
<dbReference type="SMR" id="A0L4R4"/>
<dbReference type="STRING" id="156889.Mmc1_0432"/>
<dbReference type="KEGG" id="mgm:Mmc1_0432"/>
<dbReference type="eggNOG" id="COG0495">
    <property type="taxonomic scope" value="Bacteria"/>
</dbReference>
<dbReference type="HOGENOM" id="CLU_004427_0_0_5"/>
<dbReference type="OrthoDB" id="9810365at2"/>
<dbReference type="Proteomes" id="UP000002586">
    <property type="component" value="Chromosome"/>
</dbReference>
<dbReference type="GO" id="GO:0005829">
    <property type="term" value="C:cytosol"/>
    <property type="evidence" value="ECO:0007669"/>
    <property type="project" value="TreeGrafter"/>
</dbReference>
<dbReference type="GO" id="GO:0002161">
    <property type="term" value="F:aminoacyl-tRNA deacylase activity"/>
    <property type="evidence" value="ECO:0007669"/>
    <property type="project" value="InterPro"/>
</dbReference>
<dbReference type="GO" id="GO:0005524">
    <property type="term" value="F:ATP binding"/>
    <property type="evidence" value="ECO:0007669"/>
    <property type="project" value="UniProtKB-UniRule"/>
</dbReference>
<dbReference type="GO" id="GO:0004823">
    <property type="term" value="F:leucine-tRNA ligase activity"/>
    <property type="evidence" value="ECO:0007669"/>
    <property type="project" value="UniProtKB-UniRule"/>
</dbReference>
<dbReference type="GO" id="GO:0006429">
    <property type="term" value="P:leucyl-tRNA aminoacylation"/>
    <property type="evidence" value="ECO:0007669"/>
    <property type="project" value="UniProtKB-UniRule"/>
</dbReference>
<dbReference type="CDD" id="cd07958">
    <property type="entry name" value="Anticodon_Ia_Leu_BEm"/>
    <property type="match status" value="1"/>
</dbReference>
<dbReference type="CDD" id="cd00812">
    <property type="entry name" value="LeuRS_core"/>
    <property type="match status" value="1"/>
</dbReference>
<dbReference type="FunFam" id="1.10.730.10:FF:000002">
    <property type="entry name" value="Leucine--tRNA ligase"/>
    <property type="match status" value="1"/>
</dbReference>
<dbReference type="FunFam" id="3.40.50.620:FF:000003">
    <property type="entry name" value="Leucine--tRNA ligase"/>
    <property type="match status" value="1"/>
</dbReference>
<dbReference type="FunFam" id="3.40.50.620:FF:000056">
    <property type="entry name" value="Leucine--tRNA ligase"/>
    <property type="match status" value="1"/>
</dbReference>
<dbReference type="Gene3D" id="3.40.50.620">
    <property type="entry name" value="HUPs"/>
    <property type="match status" value="2"/>
</dbReference>
<dbReference type="Gene3D" id="1.10.730.10">
    <property type="entry name" value="Isoleucyl-tRNA Synthetase, Domain 1"/>
    <property type="match status" value="1"/>
</dbReference>
<dbReference type="HAMAP" id="MF_00049_B">
    <property type="entry name" value="Leu_tRNA_synth_B"/>
    <property type="match status" value="1"/>
</dbReference>
<dbReference type="InterPro" id="IPR001412">
    <property type="entry name" value="aa-tRNA-synth_I_CS"/>
</dbReference>
<dbReference type="InterPro" id="IPR002300">
    <property type="entry name" value="aa-tRNA-synth_Ia"/>
</dbReference>
<dbReference type="InterPro" id="IPR002302">
    <property type="entry name" value="Leu-tRNA-ligase"/>
</dbReference>
<dbReference type="InterPro" id="IPR025709">
    <property type="entry name" value="Leu_tRNA-synth_edit"/>
</dbReference>
<dbReference type="InterPro" id="IPR013155">
    <property type="entry name" value="M/V/L/I-tRNA-synth_anticd-bd"/>
</dbReference>
<dbReference type="InterPro" id="IPR015413">
    <property type="entry name" value="Methionyl/Leucyl_tRNA_Synth"/>
</dbReference>
<dbReference type="InterPro" id="IPR014729">
    <property type="entry name" value="Rossmann-like_a/b/a_fold"/>
</dbReference>
<dbReference type="InterPro" id="IPR009080">
    <property type="entry name" value="tRNAsynth_Ia_anticodon-bd"/>
</dbReference>
<dbReference type="InterPro" id="IPR009008">
    <property type="entry name" value="Val/Leu/Ile-tRNA-synth_edit"/>
</dbReference>
<dbReference type="NCBIfam" id="TIGR00396">
    <property type="entry name" value="leuS_bact"/>
    <property type="match status" value="1"/>
</dbReference>
<dbReference type="PANTHER" id="PTHR43740:SF2">
    <property type="entry name" value="LEUCINE--TRNA LIGASE, MITOCHONDRIAL"/>
    <property type="match status" value="1"/>
</dbReference>
<dbReference type="PANTHER" id="PTHR43740">
    <property type="entry name" value="LEUCYL-TRNA SYNTHETASE"/>
    <property type="match status" value="1"/>
</dbReference>
<dbReference type="Pfam" id="PF08264">
    <property type="entry name" value="Anticodon_1"/>
    <property type="match status" value="1"/>
</dbReference>
<dbReference type="Pfam" id="PF00133">
    <property type="entry name" value="tRNA-synt_1"/>
    <property type="match status" value="2"/>
</dbReference>
<dbReference type="Pfam" id="PF13603">
    <property type="entry name" value="tRNA-synt_1_2"/>
    <property type="match status" value="1"/>
</dbReference>
<dbReference type="Pfam" id="PF09334">
    <property type="entry name" value="tRNA-synt_1g"/>
    <property type="match status" value="1"/>
</dbReference>
<dbReference type="PRINTS" id="PR00985">
    <property type="entry name" value="TRNASYNTHLEU"/>
</dbReference>
<dbReference type="SUPFAM" id="SSF47323">
    <property type="entry name" value="Anticodon-binding domain of a subclass of class I aminoacyl-tRNA synthetases"/>
    <property type="match status" value="1"/>
</dbReference>
<dbReference type="SUPFAM" id="SSF52374">
    <property type="entry name" value="Nucleotidylyl transferase"/>
    <property type="match status" value="1"/>
</dbReference>
<dbReference type="SUPFAM" id="SSF50677">
    <property type="entry name" value="ValRS/IleRS/LeuRS editing domain"/>
    <property type="match status" value="1"/>
</dbReference>
<dbReference type="PROSITE" id="PS00178">
    <property type="entry name" value="AA_TRNA_LIGASE_I"/>
    <property type="match status" value="1"/>
</dbReference>
<gene>
    <name evidence="1" type="primary">leuS</name>
    <name type="ordered locus">Mmc1_0432</name>
</gene>